<evidence type="ECO:0000250" key="1"/>
<evidence type="ECO:0000256" key="2">
    <source>
        <dbReference type="SAM" id="MobiDB-lite"/>
    </source>
</evidence>
<evidence type="ECO:0000305" key="3"/>
<reference key="1">
    <citation type="submission" date="1996-03" db="EMBL/GenBank/DDBJ databases">
        <title>Molecular and genetic analysis of a F17-related gene cluster.</title>
        <authorList>
            <person name="De Greve H.M.J."/>
            <person name="Heng P."/>
            <person name="Deboeck F."/>
            <person name="Yan H."/>
            <person name="Lintermans P.F.L."/>
            <person name="Hernalsteens J.-P."/>
        </authorList>
    </citation>
    <scope>NUCLEOTIDE SEQUENCE [GENOMIC DNA]</scope>
    <source>
        <strain>111KH86 / ETEC</strain>
    </source>
</reference>
<reference key="2">
    <citation type="journal article" date="2005" name="Acta Crystallogr. D">
        <title>Impact of natural variation in bacterial F17G adhesins on crystallization behaviour.</title>
        <authorList>
            <person name="Buts L."/>
            <person name="Wellens A."/>
            <person name="Van Molle I."/>
            <person name="Wyns L."/>
            <person name="Loris R."/>
            <person name="Lahmann M."/>
            <person name="Oscarson S."/>
            <person name="De Greve H.M.J."/>
            <person name="Bouckaert J."/>
        </authorList>
    </citation>
    <scope>CRYSTALLIZATION OF 23-198</scope>
</reference>
<feature type="signal peptide" evidence="1">
    <location>
        <begin position="1"/>
        <end position="22"/>
    </location>
</feature>
<feature type="chain" id="PRO_0000356268" description="F17d-G fimbrial adhesin">
    <location>
        <begin position="23"/>
        <end position="344"/>
    </location>
</feature>
<feature type="region of interest" description="Receptor-binding lectin domain" evidence="1">
    <location>
        <begin position="23"/>
        <end position="199"/>
    </location>
</feature>
<feature type="region of interest" description="Fimbrillin-binding domain" evidence="1">
    <location>
        <begin position="200"/>
        <end position="344"/>
    </location>
</feature>
<feature type="region of interest" description="Disordered" evidence="2">
    <location>
        <begin position="288"/>
        <end position="308"/>
    </location>
</feature>
<feature type="compositionally biased region" description="Polar residues" evidence="2">
    <location>
        <begin position="299"/>
        <end position="308"/>
    </location>
</feature>
<feature type="binding site" evidence="1">
    <location>
        <begin position="65"/>
        <end position="66"/>
    </location>
    <ligand>
        <name>a carbohydrate</name>
        <dbReference type="ChEBI" id="CHEBI:16646"/>
    </ligand>
</feature>
<feature type="binding site" evidence="1">
    <location>
        <begin position="110"/>
        <end position="111"/>
    </location>
    <ligand>
        <name>a carbohydrate</name>
        <dbReference type="ChEBI" id="CHEBI:16646"/>
    </ligand>
</feature>
<feature type="binding site" evidence="1">
    <location>
        <begin position="139"/>
        <end position="142"/>
    </location>
    <ligand>
        <name>a carbohydrate</name>
        <dbReference type="ChEBI" id="CHEBI:16646"/>
    </ligand>
</feature>
<feature type="disulfide bond" evidence="1">
    <location>
        <begin position="75"/>
        <end position="132"/>
    </location>
</feature>
<sequence>MTNFYKVFLAVFILVCCNISQAAVSFIGSTENDVGPSPGSYSRTHAMDNLPFVYNTGNNIGYQNANVWRISKGFCVGLDGKVDLPVVGSLDGQSIYGLTEEVGLLIWMGDTNYSRGTAMSGNSWENVFSGWCVGANTASTQGLSVRVTPVILKRNSSARYSVQKTSIGSIRMRPYNGSSAGSVQTTVNFSLNPFTLNDTVTSCRLLTPSAVNVSLAAISAGQLPSSGDEVVAGTTSLKLQCDAGVTVWATLTDATTPSNRSDILTLTGASTATGVGLRIYKNTDSTPLKFGPDSPVKGNENQWQLSTGTETSPSVRLYVKYVNTGEGINPGTVNGISTFTFSYQ</sequence>
<organism>
    <name type="scientific">Escherichia coli</name>
    <dbReference type="NCBI Taxonomy" id="562"/>
    <lineage>
        <taxon>Bacteria</taxon>
        <taxon>Pseudomonadati</taxon>
        <taxon>Pseudomonadota</taxon>
        <taxon>Gammaproteobacteria</taxon>
        <taxon>Enterobacterales</taxon>
        <taxon>Enterobacteriaceae</taxon>
        <taxon>Escherichia</taxon>
    </lineage>
</organism>
<keyword id="KW-1015">Disulfide bond</keyword>
<keyword id="KW-0281">Fimbrium</keyword>
<keyword id="KW-0430">Lectin</keyword>
<keyword id="KW-0732">Signal</keyword>
<keyword id="KW-0843">Virulence</keyword>
<dbReference type="EMBL" id="L77091">
    <property type="protein sequence ID" value="AAA92621.1"/>
    <property type="molecule type" value="Genomic_DNA"/>
</dbReference>
<dbReference type="SMR" id="Q47199"/>
<dbReference type="GO" id="GO:0009289">
    <property type="term" value="C:pilus"/>
    <property type="evidence" value="ECO:0007669"/>
    <property type="project" value="UniProtKB-SubCell"/>
</dbReference>
<dbReference type="GO" id="GO:0030246">
    <property type="term" value="F:carbohydrate binding"/>
    <property type="evidence" value="ECO:0007669"/>
    <property type="project" value="UniProtKB-KW"/>
</dbReference>
<dbReference type="GO" id="GO:0044406">
    <property type="term" value="P:adhesion of symbiont to host"/>
    <property type="evidence" value="ECO:0007669"/>
    <property type="project" value="InterPro"/>
</dbReference>
<dbReference type="GO" id="GO:0043709">
    <property type="term" value="P:cell adhesion involved in single-species biofilm formation"/>
    <property type="evidence" value="ECO:0007669"/>
    <property type="project" value="TreeGrafter"/>
</dbReference>
<dbReference type="Gene3D" id="2.60.40.1410">
    <property type="entry name" value="Bacterial adhesins - F17c-type"/>
    <property type="match status" value="1"/>
</dbReference>
<dbReference type="Gene3D" id="2.60.40.1090">
    <property type="entry name" value="Fimbrial-type adhesion domain"/>
    <property type="match status" value="1"/>
</dbReference>
<dbReference type="InterPro" id="IPR000259">
    <property type="entry name" value="Adhesion_dom_fimbrial"/>
</dbReference>
<dbReference type="InterPro" id="IPR036937">
    <property type="entry name" value="Adhesion_dom_fimbrial_sf"/>
</dbReference>
<dbReference type="InterPro" id="IPR008966">
    <property type="entry name" value="Adhesion_dom_sf"/>
</dbReference>
<dbReference type="InterPro" id="IPR050263">
    <property type="entry name" value="Bact_Fimbrial_Adh_Pro"/>
</dbReference>
<dbReference type="InterPro" id="IPR015303">
    <property type="entry name" value="Fimbrial_adhesin_lectin_dom"/>
</dbReference>
<dbReference type="PANTHER" id="PTHR33420">
    <property type="entry name" value="FIMBRIAL SUBUNIT ELFA-RELATED"/>
    <property type="match status" value="1"/>
</dbReference>
<dbReference type="PANTHER" id="PTHR33420:SF14">
    <property type="entry name" value="TYPE 1 FIMBRIN D-MANNOSE SPECIFIC ADHESIN"/>
    <property type="match status" value="1"/>
</dbReference>
<dbReference type="Pfam" id="PF09222">
    <property type="entry name" value="Fim-adh_lectin"/>
    <property type="match status" value="1"/>
</dbReference>
<dbReference type="Pfam" id="PF00419">
    <property type="entry name" value="Fimbrial"/>
    <property type="match status" value="1"/>
</dbReference>
<dbReference type="SUPFAM" id="SSF49401">
    <property type="entry name" value="Bacterial adhesins"/>
    <property type="match status" value="2"/>
</dbReference>
<gene>
    <name type="primary">f17dG</name>
</gene>
<accession>Q47199</accession>
<protein>
    <recommendedName>
        <fullName>F17d-G fimbrial adhesin</fullName>
    </recommendedName>
</protein>
<comment type="function">
    <text evidence="1">Essential fimbrial adhesion factor that mediates binding to N-acetylglucosamine-containing receptors in the host intestinal microvilli, leading to colonization of the intestinal tissue, and diarrhea or septicemia. Also confers adhesiveness to laminin and basement membranes (By similarity).</text>
</comment>
<comment type="subcellular location">
    <subcellularLocation>
        <location evidence="1">Fimbrium</location>
    </subcellularLocation>
    <text evidence="1">Attached to the tip of the fimbrial filaments.</text>
</comment>
<comment type="similarity">
    <text evidence="3">Belongs to the fimbrial protein family.</text>
</comment>
<proteinExistence type="evidence at protein level"/>
<name>F17DG_ECOLX</name>